<name>NRDR_DESHD</name>
<evidence type="ECO:0000255" key="1">
    <source>
        <dbReference type="HAMAP-Rule" id="MF_00440"/>
    </source>
</evidence>
<feature type="chain" id="PRO_1000191793" description="Transcriptional repressor NrdR">
    <location>
        <begin position="1"/>
        <end position="154"/>
    </location>
</feature>
<feature type="domain" description="ATP-cone" evidence="1">
    <location>
        <begin position="49"/>
        <end position="139"/>
    </location>
</feature>
<feature type="zinc finger region" evidence="1">
    <location>
        <begin position="3"/>
        <end position="34"/>
    </location>
</feature>
<protein>
    <recommendedName>
        <fullName evidence="1">Transcriptional repressor NrdR</fullName>
    </recommendedName>
</protein>
<comment type="function">
    <text evidence="1">Negatively regulates transcription of bacterial ribonucleotide reductase nrd genes and operons by binding to NrdR-boxes.</text>
</comment>
<comment type="cofactor">
    <cofactor evidence="1">
        <name>Zn(2+)</name>
        <dbReference type="ChEBI" id="CHEBI:29105"/>
    </cofactor>
    <text evidence="1">Binds 1 zinc ion.</text>
</comment>
<comment type="similarity">
    <text evidence="1">Belongs to the NrdR family.</text>
</comment>
<dbReference type="EMBL" id="CP001336">
    <property type="protein sequence ID" value="ACL18334.1"/>
    <property type="molecule type" value="Genomic_DNA"/>
</dbReference>
<dbReference type="RefSeq" id="WP_011459010.1">
    <property type="nucleotide sequence ID" value="NC_011830.1"/>
</dbReference>
<dbReference type="SMR" id="B8G0R5"/>
<dbReference type="KEGG" id="dhd:Dhaf_0266"/>
<dbReference type="HOGENOM" id="CLU_108412_0_0_9"/>
<dbReference type="Proteomes" id="UP000007726">
    <property type="component" value="Chromosome"/>
</dbReference>
<dbReference type="GO" id="GO:0005524">
    <property type="term" value="F:ATP binding"/>
    <property type="evidence" value="ECO:0007669"/>
    <property type="project" value="UniProtKB-KW"/>
</dbReference>
<dbReference type="GO" id="GO:0003677">
    <property type="term" value="F:DNA binding"/>
    <property type="evidence" value="ECO:0007669"/>
    <property type="project" value="UniProtKB-KW"/>
</dbReference>
<dbReference type="GO" id="GO:0008270">
    <property type="term" value="F:zinc ion binding"/>
    <property type="evidence" value="ECO:0007669"/>
    <property type="project" value="UniProtKB-UniRule"/>
</dbReference>
<dbReference type="GO" id="GO:0045892">
    <property type="term" value="P:negative regulation of DNA-templated transcription"/>
    <property type="evidence" value="ECO:0007669"/>
    <property type="project" value="UniProtKB-UniRule"/>
</dbReference>
<dbReference type="HAMAP" id="MF_00440">
    <property type="entry name" value="NrdR"/>
    <property type="match status" value="1"/>
</dbReference>
<dbReference type="InterPro" id="IPR005144">
    <property type="entry name" value="ATP-cone_dom"/>
</dbReference>
<dbReference type="InterPro" id="IPR055173">
    <property type="entry name" value="NrdR-like_N"/>
</dbReference>
<dbReference type="InterPro" id="IPR003796">
    <property type="entry name" value="RNR_NrdR-like"/>
</dbReference>
<dbReference type="NCBIfam" id="TIGR00244">
    <property type="entry name" value="transcriptional regulator NrdR"/>
    <property type="match status" value="1"/>
</dbReference>
<dbReference type="PANTHER" id="PTHR30455">
    <property type="entry name" value="TRANSCRIPTIONAL REPRESSOR NRDR"/>
    <property type="match status" value="1"/>
</dbReference>
<dbReference type="PANTHER" id="PTHR30455:SF2">
    <property type="entry name" value="TRANSCRIPTIONAL REPRESSOR NRDR"/>
    <property type="match status" value="1"/>
</dbReference>
<dbReference type="Pfam" id="PF03477">
    <property type="entry name" value="ATP-cone"/>
    <property type="match status" value="1"/>
</dbReference>
<dbReference type="Pfam" id="PF22811">
    <property type="entry name" value="Zn_ribbon_NrdR"/>
    <property type="match status" value="1"/>
</dbReference>
<dbReference type="PROSITE" id="PS51161">
    <property type="entry name" value="ATP_CONE"/>
    <property type="match status" value="1"/>
</dbReference>
<reference key="1">
    <citation type="journal article" date="2012" name="BMC Microbiol.">
        <title>Genome sequence of Desulfitobacterium hafniense DCB-2, a Gram-positive anaerobe capable of dehalogenation and metal reduction.</title>
        <authorList>
            <person name="Kim S.H."/>
            <person name="Harzman C."/>
            <person name="Davis J.K."/>
            <person name="Hutcheson R."/>
            <person name="Broderick J.B."/>
            <person name="Marsh T.L."/>
            <person name="Tiedje J.M."/>
        </authorList>
    </citation>
    <scope>NUCLEOTIDE SEQUENCE [LARGE SCALE GENOMIC DNA]</scope>
    <source>
        <strain>DSM 10664 / DCB-2</strain>
    </source>
</reference>
<gene>
    <name evidence="1" type="primary">nrdR</name>
    <name type="ordered locus">Dhaf_0266</name>
</gene>
<keyword id="KW-0067">ATP-binding</keyword>
<keyword id="KW-0238">DNA-binding</keyword>
<keyword id="KW-0479">Metal-binding</keyword>
<keyword id="KW-0547">Nucleotide-binding</keyword>
<keyword id="KW-0678">Repressor</keyword>
<keyword id="KW-0804">Transcription</keyword>
<keyword id="KW-0805">Transcription regulation</keyword>
<keyword id="KW-0862">Zinc</keyword>
<keyword id="KW-0863">Zinc-finger</keyword>
<sequence>MHCPFCGNDETKVLESRQVEEGTAVRRRRECERCARRFTTFEKFEDTPLIVVKKDGRREEFSRGKLKAGILRACEKRPVSIEQIETLVYEIEKGLRNGSEREVQSKAIGEAVMNALVHLDEVAYIRFASVYREFKDVQRFLEELHELVEKKSSR</sequence>
<proteinExistence type="inferred from homology"/>
<organism>
    <name type="scientific">Desulfitobacterium hafniense (strain DSM 10664 / DCB-2)</name>
    <dbReference type="NCBI Taxonomy" id="272564"/>
    <lineage>
        <taxon>Bacteria</taxon>
        <taxon>Bacillati</taxon>
        <taxon>Bacillota</taxon>
        <taxon>Clostridia</taxon>
        <taxon>Eubacteriales</taxon>
        <taxon>Desulfitobacteriaceae</taxon>
        <taxon>Desulfitobacterium</taxon>
    </lineage>
</organism>
<accession>B8G0R5</accession>